<feature type="chain" id="PRO_0000205694" description="Tropomyosin">
    <location>
        <begin position="1"/>
        <end position="161"/>
    </location>
</feature>
<feature type="region of interest" description="Disordered" evidence="2">
    <location>
        <begin position="40"/>
        <end position="65"/>
    </location>
</feature>
<feature type="region of interest" description="Disordered" evidence="2">
    <location>
        <begin position="107"/>
        <end position="134"/>
    </location>
</feature>
<feature type="coiled-coil region" evidence="1">
    <location>
        <begin position="1"/>
        <end position="161"/>
    </location>
</feature>
<feature type="compositionally biased region" description="Basic and acidic residues" evidence="2">
    <location>
        <begin position="40"/>
        <end position="52"/>
    </location>
</feature>
<feature type="helix" evidence="3">
    <location>
        <begin position="2"/>
        <end position="159"/>
    </location>
</feature>
<protein>
    <recommendedName>
        <fullName>Tropomyosin</fullName>
    </recommendedName>
</protein>
<keyword id="KW-0002">3D-structure</keyword>
<keyword id="KW-0175">Coiled coil</keyword>
<keyword id="KW-0963">Cytoplasm</keyword>
<keyword id="KW-0206">Cytoskeleton</keyword>
<keyword id="KW-1185">Reference proteome</keyword>
<keyword id="KW-0677">Repeat</keyword>
<accession>Q02088</accession>
<reference key="1">
    <citation type="journal article" date="1992" name="Nature">
        <title>A new tropomyosin essential for cytokinesis in the fission yeast S. pombe.</title>
        <authorList>
            <person name="Balasubramanian M.K."/>
            <person name="Helfman D.M."/>
            <person name="Hemmingsen S.M."/>
        </authorList>
    </citation>
    <scope>NUCLEOTIDE SEQUENCE [GENOMIC DNA]</scope>
    <source>
        <strain>972 / ATCC 24843</strain>
    </source>
</reference>
<reference key="2">
    <citation type="journal article" date="2002" name="Nature">
        <title>The genome sequence of Schizosaccharomyces pombe.</title>
        <authorList>
            <person name="Wood V."/>
            <person name="Gwilliam R."/>
            <person name="Rajandream M.A."/>
            <person name="Lyne M.H."/>
            <person name="Lyne R."/>
            <person name="Stewart A."/>
            <person name="Sgouros J.G."/>
            <person name="Peat N."/>
            <person name="Hayles J."/>
            <person name="Baker S.G."/>
            <person name="Basham D."/>
            <person name="Bowman S."/>
            <person name="Brooks K."/>
            <person name="Brown D."/>
            <person name="Brown S."/>
            <person name="Chillingworth T."/>
            <person name="Churcher C.M."/>
            <person name="Collins M."/>
            <person name="Connor R."/>
            <person name="Cronin A."/>
            <person name="Davis P."/>
            <person name="Feltwell T."/>
            <person name="Fraser A."/>
            <person name="Gentles S."/>
            <person name="Goble A."/>
            <person name="Hamlin N."/>
            <person name="Harris D.E."/>
            <person name="Hidalgo J."/>
            <person name="Hodgson G."/>
            <person name="Holroyd S."/>
            <person name="Hornsby T."/>
            <person name="Howarth S."/>
            <person name="Huckle E.J."/>
            <person name="Hunt S."/>
            <person name="Jagels K."/>
            <person name="James K.D."/>
            <person name="Jones L."/>
            <person name="Jones M."/>
            <person name="Leather S."/>
            <person name="McDonald S."/>
            <person name="McLean J."/>
            <person name="Mooney P."/>
            <person name="Moule S."/>
            <person name="Mungall K.L."/>
            <person name="Murphy L.D."/>
            <person name="Niblett D."/>
            <person name="Odell C."/>
            <person name="Oliver K."/>
            <person name="O'Neil S."/>
            <person name="Pearson D."/>
            <person name="Quail M.A."/>
            <person name="Rabbinowitsch E."/>
            <person name="Rutherford K.M."/>
            <person name="Rutter S."/>
            <person name="Saunders D."/>
            <person name="Seeger K."/>
            <person name="Sharp S."/>
            <person name="Skelton J."/>
            <person name="Simmonds M.N."/>
            <person name="Squares R."/>
            <person name="Squares S."/>
            <person name="Stevens K."/>
            <person name="Taylor K."/>
            <person name="Taylor R.G."/>
            <person name="Tivey A."/>
            <person name="Walsh S.V."/>
            <person name="Warren T."/>
            <person name="Whitehead S."/>
            <person name="Woodward J.R."/>
            <person name="Volckaert G."/>
            <person name="Aert R."/>
            <person name="Robben J."/>
            <person name="Grymonprez B."/>
            <person name="Weltjens I."/>
            <person name="Vanstreels E."/>
            <person name="Rieger M."/>
            <person name="Schaefer M."/>
            <person name="Mueller-Auer S."/>
            <person name="Gabel C."/>
            <person name="Fuchs M."/>
            <person name="Duesterhoeft A."/>
            <person name="Fritzc C."/>
            <person name="Holzer E."/>
            <person name="Moestl D."/>
            <person name="Hilbert H."/>
            <person name="Borzym K."/>
            <person name="Langer I."/>
            <person name="Beck A."/>
            <person name="Lehrach H."/>
            <person name="Reinhardt R."/>
            <person name="Pohl T.M."/>
            <person name="Eger P."/>
            <person name="Zimmermann W."/>
            <person name="Wedler H."/>
            <person name="Wambutt R."/>
            <person name="Purnelle B."/>
            <person name="Goffeau A."/>
            <person name="Cadieu E."/>
            <person name="Dreano S."/>
            <person name="Gloux S."/>
            <person name="Lelaure V."/>
            <person name="Mottier S."/>
            <person name="Galibert F."/>
            <person name="Aves S.J."/>
            <person name="Xiang Z."/>
            <person name="Hunt C."/>
            <person name="Moore K."/>
            <person name="Hurst S.M."/>
            <person name="Lucas M."/>
            <person name="Rochet M."/>
            <person name="Gaillardin C."/>
            <person name="Tallada V.A."/>
            <person name="Garzon A."/>
            <person name="Thode G."/>
            <person name="Daga R.R."/>
            <person name="Cruzado L."/>
            <person name="Jimenez J."/>
            <person name="Sanchez M."/>
            <person name="del Rey F."/>
            <person name="Benito J."/>
            <person name="Dominguez A."/>
            <person name="Revuelta J.L."/>
            <person name="Moreno S."/>
            <person name="Armstrong J."/>
            <person name="Forsburg S.L."/>
            <person name="Cerutti L."/>
            <person name="Lowe T."/>
            <person name="McCombie W.R."/>
            <person name="Paulsen I."/>
            <person name="Potashkin J."/>
            <person name="Shpakovski G.V."/>
            <person name="Ussery D."/>
            <person name="Barrell B.G."/>
            <person name="Nurse P."/>
        </authorList>
    </citation>
    <scope>NUCLEOTIDE SEQUENCE [LARGE SCALE GENOMIC DNA]</scope>
    <source>
        <strain>972 / ATCC 24843</strain>
    </source>
</reference>
<sequence>MDKLREKINAARAETDEAVARAEAAEAKLKEVELQLSLKEQEYESLSRKSEAAESQLEELEEETKQLRLKADNEDIQKTEAEQLSRKVELLEEELETNDKLLRETTEKMRQTDVKAEHFERRVQSLERERDDMEQKLEEMTDKYTKVKAELDEVHQALEDL</sequence>
<gene>
    <name type="primary">cdc8</name>
    <name type="ORF">SPAC27F1.02c</name>
</gene>
<name>TPM_SCHPO</name>
<proteinExistence type="evidence at protein level"/>
<organism>
    <name type="scientific">Schizosaccharomyces pombe (strain 972 / ATCC 24843)</name>
    <name type="common">Fission yeast</name>
    <dbReference type="NCBI Taxonomy" id="284812"/>
    <lineage>
        <taxon>Eukaryota</taxon>
        <taxon>Fungi</taxon>
        <taxon>Dikarya</taxon>
        <taxon>Ascomycota</taxon>
        <taxon>Taphrinomycotina</taxon>
        <taxon>Schizosaccharomycetes</taxon>
        <taxon>Schizosaccharomycetales</taxon>
        <taxon>Schizosaccharomycetaceae</taxon>
        <taxon>Schizosaccharomyces</taxon>
    </lineage>
</organism>
<dbReference type="EMBL" id="L04126">
    <property type="protein sequence ID" value="AAA35349.1"/>
    <property type="molecule type" value="Genomic_DNA"/>
</dbReference>
<dbReference type="EMBL" id="CU329670">
    <property type="protein sequence ID" value="CAA93291.2"/>
    <property type="molecule type" value="Genomic_DNA"/>
</dbReference>
<dbReference type="PIR" id="S27127">
    <property type="entry name" value="S27127"/>
</dbReference>
<dbReference type="RefSeq" id="NP_594530.1">
    <property type="nucleotide sequence ID" value="NM_001019959.2"/>
</dbReference>
<dbReference type="PDB" id="8PUZ">
    <property type="method" value="X-ray"/>
    <property type="resolution" value="2.20 A"/>
    <property type="chains" value="A/B=1-161"/>
</dbReference>
<dbReference type="PDB" id="8PV0">
    <property type="method" value="X-ray"/>
    <property type="resolution" value="2.43 A"/>
    <property type="chains" value="A/B/C/D=1-161"/>
</dbReference>
<dbReference type="PDB" id="9FF9">
    <property type="method" value="X-ray"/>
    <property type="resolution" value="2.19 A"/>
    <property type="chains" value="A/B=1-161"/>
</dbReference>
<dbReference type="PDBsum" id="8PUZ"/>
<dbReference type="PDBsum" id="8PV0"/>
<dbReference type="PDBsum" id="9FF9"/>
<dbReference type="SMR" id="Q02088"/>
<dbReference type="BioGRID" id="278427">
    <property type="interactions" value="22"/>
</dbReference>
<dbReference type="FunCoup" id="Q02088">
    <property type="interactions" value="2"/>
</dbReference>
<dbReference type="STRING" id="284812.Q02088"/>
<dbReference type="iPTMnet" id="Q02088"/>
<dbReference type="PaxDb" id="4896-SPAC27F1.02c.1"/>
<dbReference type="EnsemblFungi" id="SPAC27F1.02c.1">
    <property type="protein sequence ID" value="SPAC27F1.02c.1:pep"/>
    <property type="gene ID" value="SPAC27F1.02c"/>
</dbReference>
<dbReference type="GeneID" id="2541940"/>
<dbReference type="KEGG" id="spo:2541940"/>
<dbReference type="PomBase" id="SPAC27F1.02c">
    <property type="gene designation" value="cdc8"/>
</dbReference>
<dbReference type="VEuPathDB" id="FungiDB:SPAC27F1.02c"/>
<dbReference type="eggNOG" id="KOG1003">
    <property type="taxonomic scope" value="Eukaryota"/>
</dbReference>
<dbReference type="HOGENOM" id="CLU_104738_0_1_1"/>
<dbReference type="InParanoid" id="Q02088"/>
<dbReference type="OMA" id="EHRADEN"/>
<dbReference type="PhylomeDB" id="Q02088"/>
<dbReference type="Reactome" id="R-SPO-9013424">
    <property type="pathway name" value="RHOV GTPase cycle"/>
</dbReference>
<dbReference type="PRO" id="PR:Q02088"/>
<dbReference type="Proteomes" id="UP000002485">
    <property type="component" value="Chromosome I"/>
</dbReference>
<dbReference type="GO" id="GO:0030479">
    <property type="term" value="C:actin cortical patch"/>
    <property type="evidence" value="ECO:0000314"/>
    <property type="project" value="PomBase"/>
</dbReference>
<dbReference type="GO" id="GO:0005884">
    <property type="term" value="C:actin filament"/>
    <property type="evidence" value="ECO:0000314"/>
    <property type="project" value="PomBase"/>
</dbReference>
<dbReference type="GO" id="GO:0005826">
    <property type="term" value="C:actomyosin contractile ring"/>
    <property type="evidence" value="ECO:0000318"/>
    <property type="project" value="GO_Central"/>
</dbReference>
<dbReference type="GO" id="GO:0032153">
    <property type="term" value="C:cell division site"/>
    <property type="evidence" value="ECO:0000314"/>
    <property type="project" value="PomBase"/>
</dbReference>
<dbReference type="GO" id="GO:0005737">
    <property type="term" value="C:cytoplasm"/>
    <property type="evidence" value="ECO:0007005"/>
    <property type="project" value="PomBase"/>
</dbReference>
<dbReference type="GO" id="GO:0070648">
    <property type="term" value="C:formin-nucleated actin cable"/>
    <property type="evidence" value="ECO:0000314"/>
    <property type="project" value="PomBase"/>
</dbReference>
<dbReference type="GO" id="GO:1990819">
    <property type="term" value="C:mating projection actin fusion focus"/>
    <property type="evidence" value="ECO:0000314"/>
    <property type="project" value="PomBase"/>
</dbReference>
<dbReference type="GO" id="GO:0043332">
    <property type="term" value="C:mating projection tip"/>
    <property type="evidence" value="ECO:0000314"/>
    <property type="project" value="PomBase"/>
</dbReference>
<dbReference type="GO" id="GO:0110085">
    <property type="term" value="C:mitotic actomyosin contractile ring"/>
    <property type="evidence" value="ECO:0000314"/>
    <property type="project" value="PomBase"/>
</dbReference>
<dbReference type="GO" id="GO:0051015">
    <property type="term" value="F:actin filament binding"/>
    <property type="evidence" value="ECO:0000314"/>
    <property type="project" value="PomBase"/>
</dbReference>
<dbReference type="GO" id="GO:0003786">
    <property type="term" value="F:actin lateral binding"/>
    <property type="evidence" value="ECO:0000314"/>
    <property type="project" value="PomBase"/>
</dbReference>
<dbReference type="GO" id="GO:0044396">
    <property type="term" value="P:actin cortical patch organization"/>
    <property type="evidence" value="ECO:0000315"/>
    <property type="project" value="PomBase"/>
</dbReference>
<dbReference type="GO" id="GO:0007015">
    <property type="term" value="P:actin filament organization"/>
    <property type="evidence" value="ECO:0000318"/>
    <property type="project" value="GO_Central"/>
</dbReference>
<dbReference type="GO" id="GO:1903475">
    <property type="term" value="P:mitotic actomyosin contractile ring assembly"/>
    <property type="evidence" value="ECO:0000269"/>
    <property type="project" value="PomBase"/>
</dbReference>
<dbReference type="GO" id="GO:1902404">
    <property type="term" value="P:mitotic actomyosin contractile ring contraction"/>
    <property type="evidence" value="ECO:0000315"/>
    <property type="project" value="PomBase"/>
</dbReference>
<dbReference type="GO" id="GO:0000281">
    <property type="term" value="P:mitotic cytokinesis"/>
    <property type="evidence" value="ECO:0000315"/>
    <property type="project" value="PomBase"/>
</dbReference>
<dbReference type="GO" id="GO:0032220">
    <property type="term" value="P:plasma membrane fusion involved in cytogamy"/>
    <property type="evidence" value="ECO:0000315"/>
    <property type="project" value="PomBase"/>
</dbReference>
<dbReference type="FunFam" id="1.20.5.170:FF:000114">
    <property type="entry name" value="Tropomyosin"/>
    <property type="match status" value="1"/>
</dbReference>
<dbReference type="Gene3D" id="1.20.5.170">
    <property type="match status" value="1"/>
</dbReference>
<dbReference type="Gene3D" id="1.20.5.340">
    <property type="match status" value="1"/>
</dbReference>
<dbReference type="InterPro" id="IPR000533">
    <property type="entry name" value="Tropomyosin"/>
</dbReference>
<dbReference type="Pfam" id="PF00261">
    <property type="entry name" value="Tropomyosin"/>
    <property type="match status" value="2"/>
</dbReference>
<dbReference type="PRINTS" id="PR00194">
    <property type="entry name" value="TROPOMYOSIN"/>
</dbReference>
<dbReference type="SUPFAM" id="SSF57997">
    <property type="entry name" value="Tropomyosin"/>
    <property type="match status" value="1"/>
</dbReference>
<comment type="function">
    <text>Forms part of the F-actin contractile ring during cytokinesis.</text>
</comment>
<comment type="subunit">
    <text evidence="1">Homodimer.</text>
</comment>
<comment type="subcellular location">
    <subcellularLocation>
        <location>Cytoplasm</location>
        <location>Cytoskeleton</location>
    </subcellularLocation>
</comment>
<comment type="domain">
    <text>The molecule is in a coiled coil structure that is formed by 2 polypeptide chains. The sequence exhibits a prominent seven-residues periodicity.</text>
</comment>
<evidence type="ECO:0000250" key="1"/>
<evidence type="ECO:0000256" key="2">
    <source>
        <dbReference type="SAM" id="MobiDB-lite"/>
    </source>
</evidence>
<evidence type="ECO:0007829" key="3">
    <source>
        <dbReference type="PDB" id="9FF9"/>
    </source>
</evidence>